<name>ATL6_ARATH</name>
<protein>
    <recommendedName>
        <fullName>E3 ubiquitin-protein ligase ATL6</fullName>
        <ecNumber evidence="6">2.3.2.27</ecNumber>
    </recommendedName>
    <alternativeName>
        <fullName>RING-H2 finger protein ATL6</fullName>
    </alternativeName>
    <alternativeName>
        <fullName evidence="9">RING-type E3 ubiquitin transferase ATL6</fullName>
    </alternativeName>
</protein>
<feature type="signal peptide" evidence="2">
    <location>
        <begin position="1"/>
        <end position="29"/>
    </location>
</feature>
<feature type="chain" id="PRO_0000030707" description="E3 ubiquitin-protein ligase ATL6">
    <location>
        <begin position="30"/>
        <end position="398"/>
    </location>
</feature>
<feature type="transmembrane region" description="Helical" evidence="2">
    <location>
        <begin position="50"/>
        <end position="70"/>
    </location>
</feature>
<feature type="zinc finger region" description="RING-type; atypical" evidence="3">
    <location>
        <begin position="128"/>
        <end position="170"/>
    </location>
</feature>
<feature type="region of interest" description="Disordered" evidence="4">
    <location>
        <begin position="368"/>
        <end position="398"/>
    </location>
</feature>
<feature type="compositionally biased region" description="Low complexity" evidence="4">
    <location>
        <begin position="378"/>
        <end position="398"/>
    </location>
</feature>
<feature type="modified residue" description="Phosphoserine" evidence="10">
    <location>
        <position position="278"/>
    </location>
</feature>
<feature type="sequence conflict" description="In Ref. 1; AAD33584." evidence="9" ref="1">
    <original>V</original>
    <variation>E</variation>
    <location>
        <position position="54"/>
    </location>
</feature>
<feature type="sequence conflict" description="In Ref. 1; AAD33584." evidence="9" ref="1">
    <original>M</original>
    <variation>R</variation>
    <location>
        <position position="63"/>
    </location>
</feature>
<feature type="sequence conflict" description="In Ref. 1; AAD33584." evidence="9" ref="1">
    <original>Y</original>
    <variation>N</variation>
    <location>
        <position position="69"/>
    </location>
</feature>
<feature type="sequence conflict" description="In Ref. 1; AAD33584." evidence="9" ref="1">
    <original>A</original>
    <variation>V</variation>
    <location>
        <position position="87"/>
    </location>
</feature>
<accession>Q8RXX9</accession>
<accession>Q4FE31</accession>
<accession>Q9MA99</accession>
<accession>Q9XF65</accession>
<sequence>MRSSDHMAFAGVLPIVFLLILSSADLAASQSQPGPTNQPYNYGRLSPAMAVIVVILIAALFFMGFFSIYFRHCSGVPDAGVSPAGGARSRATVNAAARGLDVSVVETFPTFLYSDVKTQKLGKGELECAICLNEFEDDETLRLLPKCDHVFHPHCIDAWLEAHVTCPVCRANLAEQVAEGESVEPGGTEPDLELQQVVVNPEPVVTAPVPEQLVTSEVDSRRLPGVPVDLKRVKFSRSHTTGHSVVQPGECTERFTLRLPEDVRKRIMKDWKLNRTNSLLVLPRGGSSRRGKPIDRSRARSDRWLFRKTPSFLWRSRDDGSIRLGATGSVRASAVPNSTGSDSVRAGDRWAFLRNASFLWRNSSVHVPRGGVNKDGEGTSVKSTGASGSTSGSVRLPV</sequence>
<gene>
    <name type="primary">ATL6</name>
    <name type="ordered locus">At3g05200</name>
    <name type="ORF">T12H1.17</name>
</gene>
<organism>
    <name type="scientific">Arabidopsis thaliana</name>
    <name type="common">Mouse-ear cress</name>
    <dbReference type="NCBI Taxonomy" id="3702"/>
    <lineage>
        <taxon>Eukaryota</taxon>
        <taxon>Viridiplantae</taxon>
        <taxon>Streptophyta</taxon>
        <taxon>Embryophyta</taxon>
        <taxon>Tracheophyta</taxon>
        <taxon>Spermatophyta</taxon>
        <taxon>Magnoliopsida</taxon>
        <taxon>eudicotyledons</taxon>
        <taxon>Gunneridae</taxon>
        <taxon>Pentapetalae</taxon>
        <taxon>rosids</taxon>
        <taxon>malvids</taxon>
        <taxon>Brassicales</taxon>
        <taxon>Brassicaceae</taxon>
        <taxon>Camelineae</taxon>
        <taxon>Arabidopsis</taxon>
    </lineage>
</organism>
<evidence type="ECO:0000250" key="1"/>
<evidence type="ECO:0000255" key="2"/>
<evidence type="ECO:0000255" key="3">
    <source>
        <dbReference type="PROSITE-ProRule" id="PRU00175"/>
    </source>
</evidence>
<evidence type="ECO:0000256" key="4">
    <source>
        <dbReference type="SAM" id="MobiDB-lite"/>
    </source>
</evidence>
<evidence type="ECO:0000269" key="5">
    <source>
    </source>
</evidence>
<evidence type="ECO:0000269" key="6">
    <source>
    </source>
</evidence>
<evidence type="ECO:0000269" key="7">
    <source>
    </source>
</evidence>
<evidence type="ECO:0000269" key="8">
    <source ref="12"/>
</evidence>
<evidence type="ECO:0000305" key="9"/>
<evidence type="ECO:0007744" key="10">
    <source>
    </source>
</evidence>
<comment type="function">
    <text evidence="6 8">E3 ubiquitin-protein ligase able to catalyze polyubiquitination with ubiquitin-conjugating enzyme E2 UBC8 in vitro. May be involved in the plant C/N response and the early steps of the plant defense signaling pathway.</text>
</comment>
<comment type="catalytic activity">
    <reaction evidence="6">
        <text>S-ubiquitinyl-[E2 ubiquitin-conjugating enzyme]-L-cysteine + [acceptor protein]-L-lysine = [E2 ubiquitin-conjugating enzyme]-L-cysteine + N(6)-ubiquitinyl-[acceptor protein]-L-lysine.</text>
        <dbReference type="EC" id="2.3.2.27"/>
    </reaction>
</comment>
<comment type="pathway">
    <text>Protein modification; protein ubiquitination.</text>
</comment>
<comment type="subcellular location">
    <subcellularLocation>
        <location evidence="9">Membrane</location>
        <topology evidence="9">Single-pass membrane protein</topology>
    </subcellularLocation>
</comment>
<comment type="induction">
    <text evidence="5 7">Up-regulated by chitin or cellulases elicitors.</text>
</comment>
<comment type="domain">
    <text evidence="1">The RING-type zinc finger domain mediates binding to an E2 ubiquitin-conjugating enzyme.</text>
</comment>
<comment type="similarity">
    <text evidence="9">Belongs to the RING-type zinc finger family. ATL subfamily.</text>
</comment>
<comment type="sequence caution" evidence="9">
    <conflict type="erroneous initiation">
        <sequence resource="EMBL-CDS" id="AAF27026"/>
    </conflict>
</comment>
<dbReference type="EC" id="2.3.2.27" evidence="6"/>
<dbReference type="EMBL" id="AF132016">
    <property type="protein sequence ID" value="AAD33584.1"/>
    <property type="molecule type" value="mRNA"/>
</dbReference>
<dbReference type="EMBL" id="DQ086860">
    <property type="protein sequence ID" value="AAZ14076.1"/>
    <property type="molecule type" value="mRNA"/>
</dbReference>
<dbReference type="EMBL" id="AC009177">
    <property type="protein sequence ID" value="AAF27026.1"/>
    <property type="status" value="ALT_INIT"/>
    <property type="molecule type" value="Genomic_DNA"/>
</dbReference>
<dbReference type="EMBL" id="CP002686">
    <property type="protein sequence ID" value="AEE74204.1"/>
    <property type="molecule type" value="Genomic_DNA"/>
</dbReference>
<dbReference type="EMBL" id="AY080617">
    <property type="protein sequence ID" value="AAL86301.1"/>
    <property type="molecule type" value="mRNA"/>
</dbReference>
<dbReference type="RefSeq" id="NP_566249.1">
    <property type="nucleotide sequence ID" value="NM_111393.3"/>
</dbReference>
<dbReference type="SMR" id="Q8RXX9"/>
<dbReference type="BioGRID" id="5019">
    <property type="interactions" value="6"/>
</dbReference>
<dbReference type="FunCoup" id="Q8RXX9">
    <property type="interactions" value="11"/>
</dbReference>
<dbReference type="IntAct" id="Q8RXX9">
    <property type="interactions" value="4"/>
</dbReference>
<dbReference type="STRING" id="3702.Q8RXX9"/>
<dbReference type="iPTMnet" id="Q8RXX9"/>
<dbReference type="PaxDb" id="3702-AT3G05200.1"/>
<dbReference type="ProteomicsDB" id="246574"/>
<dbReference type="EnsemblPlants" id="AT3G05200.1">
    <property type="protein sequence ID" value="AT3G05200.1"/>
    <property type="gene ID" value="AT3G05200"/>
</dbReference>
<dbReference type="GeneID" id="819684"/>
<dbReference type="Gramene" id="AT3G05200.1">
    <property type="protein sequence ID" value="AT3G05200.1"/>
    <property type="gene ID" value="AT3G05200"/>
</dbReference>
<dbReference type="KEGG" id="ath:AT3G05200"/>
<dbReference type="Araport" id="AT3G05200"/>
<dbReference type="TAIR" id="AT3G05200">
    <property type="gene designation" value="ATL6"/>
</dbReference>
<dbReference type="eggNOG" id="KOG0800">
    <property type="taxonomic scope" value="Eukaryota"/>
</dbReference>
<dbReference type="HOGENOM" id="CLU_035191_1_0_1"/>
<dbReference type="InParanoid" id="Q8RXX9"/>
<dbReference type="OMA" id="GYYATNF"/>
<dbReference type="PhylomeDB" id="Q8RXX9"/>
<dbReference type="UniPathway" id="UPA00143"/>
<dbReference type="PRO" id="PR:Q8RXX9"/>
<dbReference type="Proteomes" id="UP000006548">
    <property type="component" value="Chromosome 3"/>
</dbReference>
<dbReference type="ExpressionAtlas" id="Q8RXX9">
    <property type="expression patterns" value="baseline and differential"/>
</dbReference>
<dbReference type="GO" id="GO:0005886">
    <property type="term" value="C:plasma membrane"/>
    <property type="evidence" value="ECO:0007005"/>
    <property type="project" value="TAIR"/>
</dbReference>
<dbReference type="GO" id="GO:0004842">
    <property type="term" value="F:ubiquitin-protein transferase activity"/>
    <property type="evidence" value="ECO:0000314"/>
    <property type="project" value="UniProtKB"/>
</dbReference>
<dbReference type="GO" id="GO:0008270">
    <property type="term" value="F:zinc ion binding"/>
    <property type="evidence" value="ECO:0007669"/>
    <property type="project" value="UniProtKB-KW"/>
</dbReference>
<dbReference type="GO" id="GO:0042742">
    <property type="term" value="P:defense response to bacterium"/>
    <property type="evidence" value="ECO:0000315"/>
    <property type="project" value="TAIR"/>
</dbReference>
<dbReference type="GO" id="GO:0098542">
    <property type="term" value="P:defense response to other organism"/>
    <property type="evidence" value="ECO:0000270"/>
    <property type="project" value="TAIR"/>
</dbReference>
<dbReference type="GO" id="GO:0016567">
    <property type="term" value="P:protein ubiquitination"/>
    <property type="evidence" value="ECO:0000314"/>
    <property type="project" value="UniProtKB"/>
</dbReference>
<dbReference type="CDD" id="cd16461">
    <property type="entry name" value="RING-H2_EL5-like"/>
    <property type="match status" value="1"/>
</dbReference>
<dbReference type="FunFam" id="3.30.40.10:FF:000187">
    <property type="entry name" value="E3 ubiquitin-protein ligase ATL6"/>
    <property type="match status" value="1"/>
</dbReference>
<dbReference type="Gene3D" id="3.30.40.10">
    <property type="entry name" value="Zinc/RING finger domain, C3HC4 (zinc finger)"/>
    <property type="match status" value="1"/>
</dbReference>
<dbReference type="InterPro" id="IPR053238">
    <property type="entry name" value="RING-H2_zinc_finger"/>
</dbReference>
<dbReference type="InterPro" id="IPR001841">
    <property type="entry name" value="Znf_RING"/>
</dbReference>
<dbReference type="InterPro" id="IPR013083">
    <property type="entry name" value="Znf_RING/FYVE/PHD"/>
</dbReference>
<dbReference type="PANTHER" id="PTHR14155:SF263">
    <property type="entry name" value="E3 UBIQUITIN-PROTEIN LIGASE ATL6"/>
    <property type="match status" value="1"/>
</dbReference>
<dbReference type="PANTHER" id="PTHR14155">
    <property type="entry name" value="RING FINGER DOMAIN-CONTAINING"/>
    <property type="match status" value="1"/>
</dbReference>
<dbReference type="Pfam" id="PF13639">
    <property type="entry name" value="zf-RING_2"/>
    <property type="match status" value="1"/>
</dbReference>
<dbReference type="SMART" id="SM00184">
    <property type="entry name" value="RING"/>
    <property type="match status" value="1"/>
</dbReference>
<dbReference type="SUPFAM" id="SSF57850">
    <property type="entry name" value="RING/U-box"/>
    <property type="match status" value="1"/>
</dbReference>
<dbReference type="PROSITE" id="PS50089">
    <property type="entry name" value="ZF_RING_2"/>
    <property type="match status" value="1"/>
</dbReference>
<proteinExistence type="evidence at protein level"/>
<keyword id="KW-0472">Membrane</keyword>
<keyword id="KW-0479">Metal-binding</keyword>
<keyword id="KW-0597">Phosphoprotein</keyword>
<keyword id="KW-0611">Plant defense</keyword>
<keyword id="KW-1185">Reference proteome</keyword>
<keyword id="KW-0732">Signal</keyword>
<keyword id="KW-0808">Transferase</keyword>
<keyword id="KW-0812">Transmembrane</keyword>
<keyword id="KW-1133">Transmembrane helix</keyword>
<keyword id="KW-0833">Ubl conjugation pathway</keyword>
<keyword id="KW-0862">Zinc</keyword>
<keyword id="KW-0863">Zinc-finger</keyword>
<reference key="1">
    <citation type="journal article" date="1999" name="Plant Mol. Biol.">
        <title>Early elicitor induction in members of a novel multigene family coding for highly related RING-H2 proteins in Arabidopsis thaliana.</title>
        <authorList>
            <person name="Salinas-Mondragon R.E."/>
            <person name="Garciduenas-Pina C."/>
            <person name="Guzman P."/>
        </authorList>
    </citation>
    <scope>NUCLEOTIDE SEQUENCE [MRNA]</scope>
    <scope>INDUCTION</scope>
</reference>
<reference key="2">
    <citation type="journal article" date="2005" name="Plant Physiol.">
        <title>Functional analysis of the RING-type ubiquitin ligase family of Arabidopsis.</title>
        <authorList>
            <person name="Stone S.L."/>
            <person name="Hauksdottir H."/>
            <person name="Troy A."/>
            <person name="Herschleb J."/>
            <person name="Kraft E."/>
            <person name="Callis J."/>
        </authorList>
    </citation>
    <scope>NUCLEOTIDE SEQUENCE [MRNA]</scope>
    <scope>FUNCTION</scope>
    <scope>CATALYTIC ACTIVITY</scope>
    <source>
        <strain>cv. Columbia</strain>
    </source>
</reference>
<reference key="3">
    <citation type="journal article" date="2000" name="Nature">
        <title>Sequence and analysis of chromosome 3 of the plant Arabidopsis thaliana.</title>
        <authorList>
            <person name="Salanoubat M."/>
            <person name="Lemcke K."/>
            <person name="Rieger M."/>
            <person name="Ansorge W."/>
            <person name="Unseld M."/>
            <person name="Fartmann B."/>
            <person name="Valle G."/>
            <person name="Bloecker H."/>
            <person name="Perez-Alonso M."/>
            <person name="Obermaier B."/>
            <person name="Delseny M."/>
            <person name="Boutry M."/>
            <person name="Grivell L.A."/>
            <person name="Mache R."/>
            <person name="Puigdomenech P."/>
            <person name="De Simone V."/>
            <person name="Choisne N."/>
            <person name="Artiguenave F."/>
            <person name="Robert C."/>
            <person name="Brottier P."/>
            <person name="Wincker P."/>
            <person name="Cattolico L."/>
            <person name="Weissenbach J."/>
            <person name="Saurin W."/>
            <person name="Quetier F."/>
            <person name="Schaefer M."/>
            <person name="Mueller-Auer S."/>
            <person name="Gabel C."/>
            <person name="Fuchs M."/>
            <person name="Benes V."/>
            <person name="Wurmbach E."/>
            <person name="Drzonek H."/>
            <person name="Erfle H."/>
            <person name="Jordan N."/>
            <person name="Bangert S."/>
            <person name="Wiedelmann R."/>
            <person name="Kranz H."/>
            <person name="Voss H."/>
            <person name="Holland R."/>
            <person name="Brandt P."/>
            <person name="Nyakatura G."/>
            <person name="Vezzi A."/>
            <person name="D'Angelo M."/>
            <person name="Pallavicini A."/>
            <person name="Toppo S."/>
            <person name="Simionati B."/>
            <person name="Conrad A."/>
            <person name="Hornischer K."/>
            <person name="Kauer G."/>
            <person name="Loehnert T.-H."/>
            <person name="Nordsiek G."/>
            <person name="Reichelt J."/>
            <person name="Scharfe M."/>
            <person name="Schoen O."/>
            <person name="Bargues M."/>
            <person name="Terol J."/>
            <person name="Climent J."/>
            <person name="Navarro P."/>
            <person name="Collado C."/>
            <person name="Perez-Perez A."/>
            <person name="Ottenwaelder B."/>
            <person name="Duchemin D."/>
            <person name="Cooke R."/>
            <person name="Laudie M."/>
            <person name="Berger-Llauro C."/>
            <person name="Purnelle B."/>
            <person name="Masuy D."/>
            <person name="de Haan M."/>
            <person name="Maarse A.C."/>
            <person name="Alcaraz J.-P."/>
            <person name="Cottet A."/>
            <person name="Casacuberta E."/>
            <person name="Monfort A."/>
            <person name="Argiriou A."/>
            <person name="Flores M."/>
            <person name="Liguori R."/>
            <person name="Vitale D."/>
            <person name="Mannhaupt G."/>
            <person name="Haase D."/>
            <person name="Schoof H."/>
            <person name="Rudd S."/>
            <person name="Zaccaria P."/>
            <person name="Mewes H.-W."/>
            <person name="Mayer K.F.X."/>
            <person name="Kaul S."/>
            <person name="Town C.D."/>
            <person name="Koo H.L."/>
            <person name="Tallon L.J."/>
            <person name="Jenkins J."/>
            <person name="Rooney T."/>
            <person name="Rizzo M."/>
            <person name="Walts A."/>
            <person name="Utterback T."/>
            <person name="Fujii C.Y."/>
            <person name="Shea T.P."/>
            <person name="Creasy T.H."/>
            <person name="Haas B."/>
            <person name="Maiti R."/>
            <person name="Wu D."/>
            <person name="Peterson J."/>
            <person name="Van Aken S."/>
            <person name="Pai G."/>
            <person name="Militscher J."/>
            <person name="Sellers P."/>
            <person name="Gill J.E."/>
            <person name="Feldblyum T.V."/>
            <person name="Preuss D."/>
            <person name="Lin X."/>
            <person name="Nierman W.C."/>
            <person name="Salzberg S.L."/>
            <person name="White O."/>
            <person name="Venter J.C."/>
            <person name="Fraser C.M."/>
            <person name="Kaneko T."/>
            <person name="Nakamura Y."/>
            <person name="Sato S."/>
            <person name="Kato T."/>
            <person name="Asamizu E."/>
            <person name="Sasamoto S."/>
            <person name="Kimura T."/>
            <person name="Idesawa K."/>
            <person name="Kawashima K."/>
            <person name="Kishida Y."/>
            <person name="Kiyokawa C."/>
            <person name="Kohara M."/>
            <person name="Matsumoto M."/>
            <person name="Matsuno A."/>
            <person name="Muraki A."/>
            <person name="Nakayama S."/>
            <person name="Nakazaki N."/>
            <person name="Shinpo S."/>
            <person name="Takeuchi C."/>
            <person name="Wada T."/>
            <person name="Watanabe A."/>
            <person name="Yamada M."/>
            <person name="Yasuda M."/>
            <person name="Tabata S."/>
        </authorList>
    </citation>
    <scope>NUCLEOTIDE SEQUENCE [LARGE SCALE GENOMIC DNA]</scope>
    <source>
        <strain>cv. Columbia</strain>
    </source>
</reference>
<reference key="4">
    <citation type="journal article" date="2017" name="Plant J.">
        <title>Araport11: a complete reannotation of the Arabidopsis thaliana reference genome.</title>
        <authorList>
            <person name="Cheng C.Y."/>
            <person name="Krishnakumar V."/>
            <person name="Chan A.P."/>
            <person name="Thibaud-Nissen F."/>
            <person name="Schobel S."/>
            <person name="Town C.D."/>
        </authorList>
    </citation>
    <scope>GENOME REANNOTATION</scope>
    <source>
        <strain>cv. Columbia</strain>
    </source>
</reference>
<reference key="5">
    <citation type="journal article" date="2003" name="Science">
        <title>Empirical analysis of transcriptional activity in the Arabidopsis genome.</title>
        <authorList>
            <person name="Yamada K."/>
            <person name="Lim J."/>
            <person name="Dale J.M."/>
            <person name="Chen H."/>
            <person name="Shinn P."/>
            <person name="Palm C.J."/>
            <person name="Southwick A.M."/>
            <person name="Wu H.C."/>
            <person name="Kim C.J."/>
            <person name="Nguyen M."/>
            <person name="Pham P.K."/>
            <person name="Cheuk R.F."/>
            <person name="Karlin-Newmann G."/>
            <person name="Liu S.X."/>
            <person name="Lam B."/>
            <person name="Sakano H."/>
            <person name="Wu T."/>
            <person name="Yu G."/>
            <person name="Miranda M."/>
            <person name="Quach H.L."/>
            <person name="Tripp M."/>
            <person name="Chang C.H."/>
            <person name="Lee J.M."/>
            <person name="Toriumi M.J."/>
            <person name="Chan M.M."/>
            <person name="Tang C.C."/>
            <person name="Onodera C.S."/>
            <person name="Deng J.M."/>
            <person name="Akiyama K."/>
            <person name="Ansari Y."/>
            <person name="Arakawa T."/>
            <person name="Banh J."/>
            <person name="Banno F."/>
            <person name="Bowser L."/>
            <person name="Brooks S.Y."/>
            <person name="Carninci P."/>
            <person name="Chao Q."/>
            <person name="Choy N."/>
            <person name="Enju A."/>
            <person name="Goldsmith A.D."/>
            <person name="Gurjal M."/>
            <person name="Hansen N.F."/>
            <person name="Hayashizaki Y."/>
            <person name="Johnson-Hopson C."/>
            <person name="Hsuan V.W."/>
            <person name="Iida K."/>
            <person name="Karnes M."/>
            <person name="Khan S."/>
            <person name="Koesema E."/>
            <person name="Ishida J."/>
            <person name="Jiang P.X."/>
            <person name="Jones T."/>
            <person name="Kawai J."/>
            <person name="Kamiya A."/>
            <person name="Meyers C."/>
            <person name="Nakajima M."/>
            <person name="Narusaka M."/>
            <person name="Seki M."/>
            <person name="Sakurai T."/>
            <person name="Satou M."/>
            <person name="Tamse R."/>
            <person name="Vaysberg M."/>
            <person name="Wallender E.K."/>
            <person name="Wong C."/>
            <person name="Yamamura Y."/>
            <person name="Yuan S."/>
            <person name="Shinozaki K."/>
            <person name="Davis R.W."/>
            <person name="Theologis A."/>
            <person name="Ecker J.R."/>
        </authorList>
    </citation>
    <scope>NUCLEOTIDE SEQUENCE [LARGE SCALE MRNA] OF 1-388</scope>
    <source>
        <strain>cv. Columbia</strain>
    </source>
</reference>
<reference key="6">
    <citation type="journal article" date="2002" name="Genome Biol.">
        <title>Evaluation and classification of RING-finger domains encoded by the Arabidopsis genome.</title>
        <authorList>
            <person name="Kosarev P."/>
            <person name="Mayer K.F.X."/>
            <person name="Hardtke C.S."/>
        </authorList>
    </citation>
    <scope>GENE FAMILY ORGANIZATION</scope>
</reference>
<reference key="7">
    <citation type="journal article" date="2003" name="Mol. Cell. Proteomics">
        <title>Large-scale analysis of in vivo phosphorylated membrane proteins by immobilized metal ion affinity chromatography and mass spectrometry.</title>
        <authorList>
            <person name="Nuehse T.S."/>
            <person name="Stensballe A."/>
            <person name="Jensen O.N."/>
            <person name="Peck S.C."/>
        </authorList>
    </citation>
    <scope>IDENTIFICATION BY MASS SPECTROMETRY [LARGE SCALE ANALYSIS]</scope>
    <source>
        <strain>cv. La-0</strain>
    </source>
</reference>
<reference key="8">
    <citation type="journal article" date="2004" name="Plant Cell">
        <title>Phosphoproteomics of the Arabidopsis plasma membrane and a new phosphorylation site database.</title>
        <authorList>
            <person name="Nuehse T.S."/>
            <person name="Stensballe A."/>
            <person name="Jensen O.N."/>
            <person name="Peck S.C."/>
        </authorList>
    </citation>
    <scope>IDENTIFICATION BY MASS SPECTROMETRY [LARGE SCALE ANALYSIS]</scope>
</reference>
<reference key="9">
    <citation type="journal article" date="2006" name="J. Mol. Evol.">
        <title>The ATL gene family from Arabidopsis thaliana and Oryza sativa comprises a large number of putative ubiquitin ligases of the RING-H2 type.</title>
        <authorList>
            <person name="Serrano M."/>
            <person name="Parra S."/>
            <person name="Alcaraz L.D."/>
            <person name="Guzman P."/>
        </authorList>
    </citation>
    <scope>NOMENCLATURE</scope>
    <scope>GENE FAMILY ORGANIZATION</scope>
</reference>
<reference key="10">
    <citation type="journal article" date="2007" name="Mol. Plant Microbe Interact.">
        <title>Identification of 118 Arabidopsis transcription factor and 30 ubiquitin-ligase genes responding to chitin, a plant-defense elicitor.</title>
        <authorList>
            <person name="Libault M."/>
            <person name="Wan J."/>
            <person name="Czechowski T."/>
            <person name="Udvardi M."/>
            <person name="Stacey G."/>
        </authorList>
    </citation>
    <scope>INDUCTION BY CHITIN</scope>
</reference>
<reference key="11">
    <citation type="journal article" date="2009" name="Plant Physiol.">
        <title>Large-scale Arabidopsis phosphoproteome profiling reveals novel chloroplast kinase substrates and phosphorylation networks.</title>
        <authorList>
            <person name="Reiland S."/>
            <person name="Messerli G."/>
            <person name="Baerenfaller K."/>
            <person name="Gerrits B."/>
            <person name="Endler A."/>
            <person name="Grossmann J."/>
            <person name="Gruissem W."/>
            <person name="Baginsky S."/>
        </authorList>
    </citation>
    <scope>PHOSPHORYLATION [LARGE SCALE ANALYSIS] AT SER-278</scope>
    <scope>IDENTIFICATION BY MASS SPECTROMETRY [LARGE SCALE ANALYSIS]</scope>
</reference>
<reference key="12">
    <citation type="book" date="2009" name="Proceedings of the 20th international conference on Arabidopsis research">
        <title>SSV1 and ATL6 as C/N regulatory E3 ligase, are also involved in immune response system in Arabidopsis.</title>
        <authorList>
            <person name="Maekawa S."/>
            <person name="Sato T."/>
            <person name="Asada Y."/>
            <person name="Yasuda S."/>
            <person name="Yoshida M."/>
            <person name="Yamaguchi J."/>
        </authorList>
    </citation>
    <scope>FUNCTION</scope>
</reference>